<gene>
    <name type="primary">ecsC</name>
    <name type="synonym">prsT</name>
    <name type="synonym">yhaB</name>
    <name type="ordered locus">BSU10060</name>
</gene>
<keyword id="KW-1185">Reference proteome</keyword>
<accession>P55341</accession>
<protein>
    <recommendedName>
        <fullName>Protein EcsC</fullName>
    </recommendedName>
</protein>
<reference key="1">
    <citation type="journal article" date="1996" name="Microbiology">
        <title>Molecular analysis of an operon in Bacillus subtilis encoding a novel ABC transporter with a role in exoprotein production, sporulation and competence.</title>
        <authorList>
            <person name="Leskela S."/>
            <person name="Kontinen V.P."/>
            <person name="Sarvas M."/>
        </authorList>
    </citation>
    <scope>NUCLEOTIDE SEQUENCE [GENOMIC DNA]</scope>
    <source>
        <strain>168</strain>
    </source>
</reference>
<reference key="2">
    <citation type="journal article" date="1998" name="Microbiology">
        <title>The 172 kb prkA-addAB region from 83 degrees to 97 degrees of the Bacillus subtilis chromosome contains several dysfunctional genes, the glyB marker, many genes encoding transporter proteins, and the ubiquitous hit gene.</title>
        <authorList>
            <person name="Noback M.A."/>
            <person name="Holsappel S."/>
            <person name="Kiewiet R."/>
            <person name="Terpstra P."/>
            <person name="Wambutt R."/>
            <person name="Wedler H."/>
            <person name="Venema G."/>
            <person name="Bron S."/>
        </authorList>
    </citation>
    <scope>NUCLEOTIDE SEQUENCE [GENOMIC DNA]</scope>
    <source>
        <strain>168</strain>
    </source>
</reference>
<reference key="3">
    <citation type="journal article" date="1997" name="Nature">
        <title>The complete genome sequence of the Gram-positive bacterium Bacillus subtilis.</title>
        <authorList>
            <person name="Kunst F."/>
            <person name="Ogasawara N."/>
            <person name="Moszer I."/>
            <person name="Albertini A.M."/>
            <person name="Alloni G."/>
            <person name="Azevedo V."/>
            <person name="Bertero M.G."/>
            <person name="Bessieres P."/>
            <person name="Bolotin A."/>
            <person name="Borchert S."/>
            <person name="Borriss R."/>
            <person name="Boursier L."/>
            <person name="Brans A."/>
            <person name="Braun M."/>
            <person name="Brignell S.C."/>
            <person name="Bron S."/>
            <person name="Brouillet S."/>
            <person name="Bruschi C.V."/>
            <person name="Caldwell B."/>
            <person name="Capuano V."/>
            <person name="Carter N.M."/>
            <person name="Choi S.-K."/>
            <person name="Codani J.-J."/>
            <person name="Connerton I.F."/>
            <person name="Cummings N.J."/>
            <person name="Daniel R.A."/>
            <person name="Denizot F."/>
            <person name="Devine K.M."/>
            <person name="Duesterhoeft A."/>
            <person name="Ehrlich S.D."/>
            <person name="Emmerson P.T."/>
            <person name="Entian K.-D."/>
            <person name="Errington J."/>
            <person name="Fabret C."/>
            <person name="Ferrari E."/>
            <person name="Foulger D."/>
            <person name="Fritz C."/>
            <person name="Fujita M."/>
            <person name="Fujita Y."/>
            <person name="Fuma S."/>
            <person name="Galizzi A."/>
            <person name="Galleron N."/>
            <person name="Ghim S.-Y."/>
            <person name="Glaser P."/>
            <person name="Goffeau A."/>
            <person name="Golightly E.J."/>
            <person name="Grandi G."/>
            <person name="Guiseppi G."/>
            <person name="Guy B.J."/>
            <person name="Haga K."/>
            <person name="Haiech J."/>
            <person name="Harwood C.R."/>
            <person name="Henaut A."/>
            <person name="Hilbert H."/>
            <person name="Holsappel S."/>
            <person name="Hosono S."/>
            <person name="Hullo M.-F."/>
            <person name="Itaya M."/>
            <person name="Jones L.-M."/>
            <person name="Joris B."/>
            <person name="Karamata D."/>
            <person name="Kasahara Y."/>
            <person name="Klaerr-Blanchard M."/>
            <person name="Klein C."/>
            <person name="Kobayashi Y."/>
            <person name="Koetter P."/>
            <person name="Koningstein G."/>
            <person name="Krogh S."/>
            <person name="Kumano M."/>
            <person name="Kurita K."/>
            <person name="Lapidus A."/>
            <person name="Lardinois S."/>
            <person name="Lauber J."/>
            <person name="Lazarevic V."/>
            <person name="Lee S.-M."/>
            <person name="Levine A."/>
            <person name="Liu H."/>
            <person name="Masuda S."/>
            <person name="Mauel C."/>
            <person name="Medigue C."/>
            <person name="Medina N."/>
            <person name="Mellado R.P."/>
            <person name="Mizuno M."/>
            <person name="Moestl D."/>
            <person name="Nakai S."/>
            <person name="Noback M."/>
            <person name="Noone D."/>
            <person name="O'Reilly M."/>
            <person name="Ogawa K."/>
            <person name="Ogiwara A."/>
            <person name="Oudega B."/>
            <person name="Park S.-H."/>
            <person name="Parro V."/>
            <person name="Pohl T.M."/>
            <person name="Portetelle D."/>
            <person name="Porwollik S."/>
            <person name="Prescott A.M."/>
            <person name="Presecan E."/>
            <person name="Pujic P."/>
            <person name="Purnelle B."/>
            <person name="Rapoport G."/>
            <person name="Rey M."/>
            <person name="Reynolds S."/>
            <person name="Rieger M."/>
            <person name="Rivolta C."/>
            <person name="Rocha E."/>
            <person name="Roche B."/>
            <person name="Rose M."/>
            <person name="Sadaie Y."/>
            <person name="Sato T."/>
            <person name="Scanlan E."/>
            <person name="Schleich S."/>
            <person name="Schroeter R."/>
            <person name="Scoffone F."/>
            <person name="Sekiguchi J."/>
            <person name="Sekowska A."/>
            <person name="Seror S.J."/>
            <person name="Serror P."/>
            <person name="Shin B.-S."/>
            <person name="Soldo B."/>
            <person name="Sorokin A."/>
            <person name="Tacconi E."/>
            <person name="Takagi T."/>
            <person name="Takahashi H."/>
            <person name="Takemaru K."/>
            <person name="Takeuchi M."/>
            <person name="Tamakoshi A."/>
            <person name="Tanaka T."/>
            <person name="Terpstra P."/>
            <person name="Tognoni A."/>
            <person name="Tosato V."/>
            <person name="Uchiyama S."/>
            <person name="Vandenbol M."/>
            <person name="Vannier F."/>
            <person name="Vassarotti A."/>
            <person name="Viari A."/>
            <person name="Wambutt R."/>
            <person name="Wedler E."/>
            <person name="Wedler H."/>
            <person name="Weitzenegger T."/>
            <person name="Winters P."/>
            <person name="Wipat A."/>
            <person name="Yamamoto H."/>
            <person name="Yamane K."/>
            <person name="Yasumoto K."/>
            <person name="Yata K."/>
            <person name="Yoshida K."/>
            <person name="Yoshikawa H.-F."/>
            <person name="Zumstein E."/>
            <person name="Yoshikawa H."/>
            <person name="Danchin A."/>
        </authorList>
    </citation>
    <scope>NUCLEOTIDE SEQUENCE [LARGE SCALE GENOMIC DNA]</scope>
    <source>
        <strain>168</strain>
    </source>
</reference>
<sequence length="236" mass="26712">MTDNQLLMQEALEWKMHFLRKDSMFERFSKRVQTKVNERIPEKIHTVVTESVKKMVEATMAGSNIITYKKDTSALSLSEKNELAKKTIVSYQKVAAAEGVGTGAGGIFLSIADFPLLLSIKMKCLFTLSSIYGFDVKDAQERIFLLLVFQLAFSSDDGRKSLFSVIENWETEKKSIDWRVFQQEYRDYIDVVKLFQLLPGVGAAVGGIANYKLLAQLGETARHVFHLRILKETAGE</sequence>
<comment type="function">
    <text>Unknown, does not resemble components of ABC transporters.</text>
</comment>
<proteinExistence type="predicted"/>
<dbReference type="EMBL" id="X87807">
    <property type="protein sequence ID" value="CAA61076.1"/>
    <property type="molecule type" value="Genomic_DNA"/>
</dbReference>
<dbReference type="EMBL" id="Y14077">
    <property type="protein sequence ID" value="CAA74407.1"/>
    <property type="molecule type" value="Genomic_DNA"/>
</dbReference>
<dbReference type="EMBL" id="AL009126">
    <property type="protein sequence ID" value="CAB12846.1"/>
    <property type="molecule type" value="Genomic_DNA"/>
</dbReference>
<dbReference type="PIR" id="H69619">
    <property type="entry name" value="H69619"/>
</dbReference>
<dbReference type="RefSeq" id="NP_388887.1">
    <property type="nucleotide sequence ID" value="NC_000964.3"/>
</dbReference>
<dbReference type="RefSeq" id="WP_003233225.1">
    <property type="nucleotide sequence ID" value="NZ_OZ025638.1"/>
</dbReference>
<dbReference type="SMR" id="P55341"/>
<dbReference type="FunCoup" id="P55341">
    <property type="interactions" value="11"/>
</dbReference>
<dbReference type="STRING" id="224308.BSU10060"/>
<dbReference type="TCDB" id="3.A.1.143.1">
    <property type="family name" value="the atp-binding cassette (abc) superfamily"/>
</dbReference>
<dbReference type="PaxDb" id="224308-BSU10060"/>
<dbReference type="DNASU" id="939774"/>
<dbReference type="EnsemblBacteria" id="CAB12846">
    <property type="protein sequence ID" value="CAB12846"/>
    <property type="gene ID" value="BSU_10060"/>
</dbReference>
<dbReference type="GeneID" id="939774"/>
<dbReference type="KEGG" id="bsu:BSU10060"/>
<dbReference type="PATRIC" id="fig|224308.179.peg.1082"/>
<dbReference type="eggNOG" id="ENOG502Z89E">
    <property type="taxonomic scope" value="Bacteria"/>
</dbReference>
<dbReference type="InParanoid" id="P55341"/>
<dbReference type="OrthoDB" id="1705901at2"/>
<dbReference type="PhylomeDB" id="P55341"/>
<dbReference type="BioCyc" id="BSUB:BSU10060-MONOMER"/>
<dbReference type="Proteomes" id="UP000001570">
    <property type="component" value="Chromosome"/>
</dbReference>
<dbReference type="InterPro" id="IPR024787">
    <property type="entry name" value="EcsC"/>
</dbReference>
<dbReference type="PANTHER" id="PTHR41260">
    <property type="entry name" value="PROTEIN ECSC"/>
    <property type="match status" value="1"/>
</dbReference>
<dbReference type="PANTHER" id="PTHR41260:SF1">
    <property type="entry name" value="PROTEIN ECSC"/>
    <property type="match status" value="1"/>
</dbReference>
<dbReference type="Pfam" id="PF12787">
    <property type="entry name" value="EcsC"/>
    <property type="match status" value="1"/>
</dbReference>
<feature type="chain" id="PRO_0000086927" description="Protein EcsC">
    <location>
        <begin position="1"/>
        <end position="236"/>
    </location>
</feature>
<name>ECSC_BACSU</name>
<organism>
    <name type="scientific">Bacillus subtilis (strain 168)</name>
    <dbReference type="NCBI Taxonomy" id="224308"/>
    <lineage>
        <taxon>Bacteria</taxon>
        <taxon>Bacillati</taxon>
        <taxon>Bacillota</taxon>
        <taxon>Bacilli</taxon>
        <taxon>Bacillales</taxon>
        <taxon>Bacillaceae</taxon>
        <taxon>Bacillus</taxon>
    </lineage>
</organism>